<name>AROE_HALLT</name>
<protein>
    <recommendedName>
        <fullName evidence="1">Shikimate dehydrogenase (NADP(+))</fullName>
        <shortName evidence="1">SDH</shortName>
        <ecNumber evidence="1">1.1.1.25</ecNumber>
    </recommendedName>
</protein>
<proteinExistence type="inferred from homology"/>
<organism>
    <name type="scientific">Halorubrum lacusprofundi (strain ATCC 49239 / DSM 5036 / JCM 8891 / ACAM 34)</name>
    <dbReference type="NCBI Taxonomy" id="416348"/>
    <lineage>
        <taxon>Archaea</taxon>
        <taxon>Methanobacteriati</taxon>
        <taxon>Methanobacteriota</taxon>
        <taxon>Stenosarchaea group</taxon>
        <taxon>Halobacteria</taxon>
        <taxon>Halobacteriales</taxon>
        <taxon>Haloferacaceae</taxon>
        <taxon>Halorubrum</taxon>
    </lineage>
</organism>
<accession>B9LSZ3</accession>
<sequence>MDVYGLIGNPVGHSLSPPMHEAGYGTLGIDARYVTFEPAPDDAVAAIGGAGALGVAGLNVTVPFKQDALDAVDPAPLAERIGAVNTVDFGPLRAGDADRPRGHNTDAAGVKRAFSHHDIELAGRDAVVVGAGGAGRAAAFALADAGATVHVANRTAERAVDLADAVPGATGGGLDDLGDRIAGADVLVNATSVGMDEPEATPVPADHLHGDLAVLDAVYAPIETRLLREAAAAGATTIDGAWMLLFQGVEAFEIWTGADAPVEAMNAALRAELE</sequence>
<comment type="function">
    <text evidence="1">Involved in the biosynthesis of the chorismate, which leads to the biosynthesis of aromatic amino acids. Catalyzes the reversible NADPH linked reduction of 3-dehydroshikimate (DHSA) to yield shikimate (SA).</text>
</comment>
<comment type="catalytic activity">
    <reaction evidence="1">
        <text>shikimate + NADP(+) = 3-dehydroshikimate + NADPH + H(+)</text>
        <dbReference type="Rhea" id="RHEA:17737"/>
        <dbReference type="ChEBI" id="CHEBI:15378"/>
        <dbReference type="ChEBI" id="CHEBI:16630"/>
        <dbReference type="ChEBI" id="CHEBI:36208"/>
        <dbReference type="ChEBI" id="CHEBI:57783"/>
        <dbReference type="ChEBI" id="CHEBI:58349"/>
        <dbReference type="EC" id="1.1.1.25"/>
    </reaction>
</comment>
<comment type="pathway">
    <text evidence="1">Metabolic intermediate biosynthesis; chorismate biosynthesis; chorismate from D-erythrose 4-phosphate and phosphoenolpyruvate: step 4/7.</text>
</comment>
<comment type="subunit">
    <text evidence="1">Homodimer.</text>
</comment>
<comment type="similarity">
    <text evidence="1">Belongs to the shikimate dehydrogenase family.</text>
</comment>
<reference key="1">
    <citation type="journal article" date="2016" name="Stand. Genomic Sci.">
        <title>Complete genome sequence of the Antarctic Halorubrum lacusprofundi type strain ACAM 34.</title>
        <authorList>
            <person name="Anderson I.J."/>
            <person name="DasSarma P."/>
            <person name="Lucas S."/>
            <person name="Copeland A."/>
            <person name="Lapidus A."/>
            <person name="Del Rio T.G."/>
            <person name="Tice H."/>
            <person name="Dalin E."/>
            <person name="Bruce D.C."/>
            <person name="Goodwin L."/>
            <person name="Pitluck S."/>
            <person name="Sims D."/>
            <person name="Brettin T.S."/>
            <person name="Detter J.C."/>
            <person name="Han C.S."/>
            <person name="Larimer F."/>
            <person name="Hauser L."/>
            <person name="Land M."/>
            <person name="Ivanova N."/>
            <person name="Richardson P."/>
            <person name="Cavicchioli R."/>
            <person name="DasSarma S."/>
            <person name="Woese C.R."/>
            <person name="Kyrpides N.C."/>
        </authorList>
    </citation>
    <scope>NUCLEOTIDE SEQUENCE [LARGE SCALE GENOMIC DNA]</scope>
    <source>
        <strain>ATCC 49239 / DSM 5036 / JCM 8891 / ACAM 34</strain>
    </source>
</reference>
<evidence type="ECO:0000255" key="1">
    <source>
        <dbReference type="HAMAP-Rule" id="MF_00222"/>
    </source>
</evidence>
<keyword id="KW-0028">Amino-acid biosynthesis</keyword>
<keyword id="KW-0057">Aromatic amino acid biosynthesis</keyword>
<keyword id="KW-0521">NADP</keyword>
<keyword id="KW-0560">Oxidoreductase</keyword>
<keyword id="KW-1185">Reference proteome</keyword>
<dbReference type="EC" id="1.1.1.25" evidence="1"/>
<dbReference type="EMBL" id="CP001365">
    <property type="protein sequence ID" value="ACM56058.1"/>
    <property type="molecule type" value="Genomic_DNA"/>
</dbReference>
<dbReference type="RefSeq" id="WP_012659693.1">
    <property type="nucleotide sequence ID" value="NC_012029.1"/>
</dbReference>
<dbReference type="SMR" id="B9LSZ3"/>
<dbReference type="GeneID" id="7401074"/>
<dbReference type="KEGG" id="hla:Hlac_0456"/>
<dbReference type="eggNOG" id="arCOG01033">
    <property type="taxonomic scope" value="Archaea"/>
</dbReference>
<dbReference type="HOGENOM" id="CLU_044063_4_1_2"/>
<dbReference type="UniPathway" id="UPA00053">
    <property type="reaction ID" value="UER00087"/>
</dbReference>
<dbReference type="Proteomes" id="UP000000740">
    <property type="component" value="Chromosome 1"/>
</dbReference>
<dbReference type="GO" id="GO:0050661">
    <property type="term" value="F:NADP binding"/>
    <property type="evidence" value="ECO:0007669"/>
    <property type="project" value="InterPro"/>
</dbReference>
<dbReference type="GO" id="GO:0004764">
    <property type="term" value="F:shikimate 3-dehydrogenase (NADP+) activity"/>
    <property type="evidence" value="ECO:0007669"/>
    <property type="project" value="UniProtKB-UniRule"/>
</dbReference>
<dbReference type="GO" id="GO:0008652">
    <property type="term" value="P:amino acid biosynthetic process"/>
    <property type="evidence" value="ECO:0007669"/>
    <property type="project" value="UniProtKB-KW"/>
</dbReference>
<dbReference type="GO" id="GO:0009073">
    <property type="term" value="P:aromatic amino acid family biosynthetic process"/>
    <property type="evidence" value="ECO:0007669"/>
    <property type="project" value="UniProtKB-KW"/>
</dbReference>
<dbReference type="GO" id="GO:0009423">
    <property type="term" value="P:chorismate biosynthetic process"/>
    <property type="evidence" value="ECO:0007669"/>
    <property type="project" value="UniProtKB-UniRule"/>
</dbReference>
<dbReference type="GO" id="GO:0019632">
    <property type="term" value="P:shikimate metabolic process"/>
    <property type="evidence" value="ECO:0007669"/>
    <property type="project" value="InterPro"/>
</dbReference>
<dbReference type="CDD" id="cd01065">
    <property type="entry name" value="NAD_bind_Shikimate_DH"/>
    <property type="match status" value="1"/>
</dbReference>
<dbReference type="Gene3D" id="3.40.50.10860">
    <property type="entry name" value="Leucine Dehydrogenase, chain A, domain 1"/>
    <property type="match status" value="1"/>
</dbReference>
<dbReference type="Gene3D" id="3.40.50.720">
    <property type="entry name" value="NAD(P)-binding Rossmann-like Domain"/>
    <property type="match status" value="1"/>
</dbReference>
<dbReference type="HAMAP" id="MF_00222">
    <property type="entry name" value="Shikimate_DH_AroE"/>
    <property type="match status" value="1"/>
</dbReference>
<dbReference type="InterPro" id="IPR046346">
    <property type="entry name" value="Aminoacid_DH-like_N_sf"/>
</dbReference>
<dbReference type="InterPro" id="IPR036291">
    <property type="entry name" value="NAD(P)-bd_dom_sf"/>
</dbReference>
<dbReference type="InterPro" id="IPR041121">
    <property type="entry name" value="SDH_C"/>
</dbReference>
<dbReference type="InterPro" id="IPR011342">
    <property type="entry name" value="Shikimate_DH"/>
</dbReference>
<dbReference type="InterPro" id="IPR013708">
    <property type="entry name" value="Shikimate_DH-bd_N"/>
</dbReference>
<dbReference type="InterPro" id="IPR022893">
    <property type="entry name" value="Shikimate_DH_fam"/>
</dbReference>
<dbReference type="InterPro" id="IPR006151">
    <property type="entry name" value="Shikm_DH/Glu-tRNA_Rdtase"/>
</dbReference>
<dbReference type="NCBIfam" id="TIGR00507">
    <property type="entry name" value="aroE"/>
    <property type="match status" value="1"/>
</dbReference>
<dbReference type="NCBIfam" id="NF001319">
    <property type="entry name" value="PRK00258.3-3"/>
    <property type="match status" value="1"/>
</dbReference>
<dbReference type="PANTHER" id="PTHR21089:SF1">
    <property type="entry name" value="BIFUNCTIONAL 3-DEHYDROQUINATE DEHYDRATASE_SHIKIMATE DEHYDROGENASE, CHLOROPLASTIC"/>
    <property type="match status" value="1"/>
</dbReference>
<dbReference type="PANTHER" id="PTHR21089">
    <property type="entry name" value="SHIKIMATE DEHYDROGENASE"/>
    <property type="match status" value="1"/>
</dbReference>
<dbReference type="Pfam" id="PF18317">
    <property type="entry name" value="SDH_C"/>
    <property type="match status" value="1"/>
</dbReference>
<dbReference type="Pfam" id="PF01488">
    <property type="entry name" value="Shikimate_DH"/>
    <property type="match status" value="1"/>
</dbReference>
<dbReference type="Pfam" id="PF08501">
    <property type="entry name" value="Shikimate_dh_N"/>
    <property type="match status" value="1"/>
</dbReference>
<dbReference type="SUPFAM" id="SSF53223">
    <property type="entry name" value="Aminoacid dehydrogenase-like, N-terminal domain"/>
    <property type="match status" value="1"/>
</dbReference>
<dbReference type="SUPFAM" id="SSF51735">
    <property type="entry name" value="NAD(P)-binding Rossmann-fold domains"/>
    <property type="match status" value="1"/>
</dbReference>
<feature type="chain" id="PRO_1000124887" description="Shikimate dehydrogenase (NADP(+))">
    <location>
        <begin position="1"/>
        <end position="274"/>
    </location>
</feature>
<feature type="active site" description="Proton acceptor" evidence="1">
    <location>
        <position position="65"/>
    </location>
</feature>
<feature type="binding site" evidence="1">
    <location>
        <begin position="14"/>
        <end position="16"/>
    </location>
    <ligand>
        <name>shikimate</name>
        <dbReference type="ChEBI" id="CHEBI:36208"/>
    </ligand>
</feature>
<feature type="binding site" evidence="1">
    <location>
        <position position="61"/>
    </location>
    <ligand>
        <name>shikimate</name>
        <dbReference type="ChEBI" id="CHEBI:36208"/>
    </ligand>
</feature>
<feature type="binding site" evidence="1">
    <location>
        <position position="85"/>
    </location>
    <ligand>
        <name>shikimate</name>
        <dbReference type="ChEBI" id="CHEBI:36208"/>
    </ligand>
</feature>
<feature type="binding site" evidence="1">
    <location>
        <position position="106"/>
    </location>
    <ligand>
        <name>shikimate</name>
        <dbReference type="ChEBI" id="CHEBI:36208"/>
    </ligand>
</feature>
<feature type="binding site" evidence="1">
    <location>
        <begin position="130"/>
        <end position="134"/>
    </location>
    <ligand>
        <name>NADP(+)</name>
        <dbReference type="ChEBI" id="CHEBI:58349"/>
    </ligand>
</feature>
<feature type="binding site" evidence="1">
    <location>
        <begin position="153"/>
        <end position="158"/>
    </location>
    <ligand>
        <name>NADP(+)</name>
        <dbReference type="ChEBI" id="CHEBI:58349"/>
    </ligand>
</feature>
<feature type="binding site" evidence="1">
    <location>
        <position position="217"/>
    </location>
    <ligand>
        <name>NADP(+)</name>
        <dbReference type="ChEBI" id="CHEBI:58349"/>
    </ligand>
</feature>
<feature type="binding site" evidence="1">
    <location>
        <position position="219"/>
    </location>
    <ligand>
        <name>shikimate</name>
        <dbReference type="ChEBI" id="CHEBI:36208"/>
    </ligand>
</feature>
<feature type="binding site" evidence="1">
    <location>
        <position position="240"/>
    </location>
    <ligand>
        <name>NADP(+)</name>
        <dbReference type="ChEBI" id="CHEBI:58349"/>
    </ligand>
</feature>
<gene>
    <name evidence="1" type="primary">aroE</name>
    <name type="ordered locus">Hlac_0456</name>
</gene>